<name>ETFB_MOUSE</name>
<organism>
    <name type="scientific">Mus musculus</name>
    <name type="common">Mouse</name>
    <dbReference type="NCBI Taxonomy" id="10090"/>
    <lineage>
        <taxon>Eukaryota</taxon>
        <taxon>Metazoa</taxon>
        <taxon>Chordata</taxon>
        <taxon>Craniata</taxon>
        <taxon>Vertebrata</taxon>
        <taxon>Euteleostomi</taxon>
        <taxon>Mammalia</taxon>
        <taxon>Eutheria</taxon>
        <taxon>Euarchontoglires</taxon>
        <taxon>Glires</taxon>
        <taxon>Rodentia</taxon>
        <taxon>Myomorpha</taxon>
        <taxon>Muroidea</taxon>
        <taxon>Muridae</taxon>
        <taxon>Murinae</taxon>
        <taxon>Mus</taxon>
        <taxon>Mus</taxon>
    </lineage>
</organism>
<protein>
    <recommendedName>
        <fullName evidence="4">Electron transfer flavoprotein subunit beta</fullName>
        <shortName evidence="1">Beta-ETF</shortName>
    </recommendedName>
</protein>
<keyword id="KW-0007">Acetylation</keyword>
<keyword id="KW-0903">Direct protein sequencing</keyword>
<keyword id="KW-0249">Electron transport</keyword>
<keyword id="KW-0488">Methylation</keyword>
<keyword id="KW-0496">Mitochondrion</keyword>
<keyword id="KW-0547">Nucleotide-binding</keyword>
<keyword id="KW-0597">Phosphoprotein</keyword>
<keyword id="KW-1185">Reference proteome</keyword>
<keyword id="KW-0813">Transport</keyword>
<dbReference type="EMBL" id="AK002407">
    <property type="protein sequence ID" value="BAB22076.1"/>
    <property type="molecule type" value="mRNA"/>
</dbReference>
<dbReference type="EMBL" id="AK150293">
    <property type="protein sequence ID" value="BAE29447.1"/>
    <property type="molecule type" value="mRNA"/>
</dbReference>
<dbReference type="EMBL" id="BC069877">
    <property type="protein sequence ID" value="AAH69877.1"/>
    <property type="molecule type" value="mRNA"/>
</dbReference>
<dbReference type="EMBL" id="BC049237">
    <property type="protein sequence ID" value="AAH49237.1"/>
    <property type="molecule type" value="mRNA"/>
</dbReference>
<dbReference type="CCDS" id="CCDS21171.1"/>
<dbReference type="RefSeq" id="NP_080971.2">
    <property type="nucleotide sequence ID" value="NM_026695.3"/>
</dbReference>
<dbReference type="SMR" id="Q9DCW4"/>
<dbReference type="BioGRID" id="225938">
    <property type="interactions" value="104"/>
</dbReference>
<dbReference type="ComplexPortal" id="CPX-865">
    <property type="entry name" value="Electron transfer flavoprotein complex"/>
</dbReference>
<dbReference type="FunCoup" id="Q9DCW4">
    <property type="interactions" value="1693"/>
</dbReference>
<dbReference type="IntAct" id="Q9DCW4">
    <property type="interactions" value="5"/>
</dbReference>
<dbReference type="MINT" id="Q9DCW4"/>
<dbReference type="STRING" id="10090.ENSMUSP00000004729"/>
<dbReference type="GlyGen" id="Q9DCW4">
    <property type="glycosylation" value="1 site, 1 O-linked glycan (1 site)"/>
</dbReference>
<dbReference type="iPTMnet" id="Q9DCW4"/>
<dbReference type="PhosphoSitePlus" id="Q9DCW4"/>
<dbReference type="SwissPalm" id="Q9DCW4"/>
<dbReference type="REPRODUCTION-2DPAGE" id="Q9DCW4"/>
<dbReference type="CPTAC" id="non-CPTAC-3801"/>
<dbReference type="jPOST" id="Q9DCW4"/>
<dbReference type="PaxDb" id="10090-ENSMUSP00000004729"/>
<dbReference type="PeptideAtlas" id="Q9DCW4"/>
<dbReference type="ProteomicsDB" id="275895"/>
<dbReference type="Pumba" id="Q9DCW4"/>
<dbReference type="TopDownProteomics" id="Q9DCW4"/>
<dbReference type="Ensembl" id="ENSMUST00000004729.5">
    <property type="protein sequence ID" value="ENSMUSP00000004729.4"/>
    <property type="gene ID" value="ENSMUSG00000004610.5"/>
</dbReference>
<dbReference type="GeneID" id="110826"/>
<dbReference type="KEGG" id="mmu:110826"/>
<dbReference type="UCSC" id="uc009gmt.2">
    <property type="organism name" value="mouse"/>
</dbReference>
<dbReference type="AGR" id="MGI:106098"/>
<dbReference type="CTD" id="2109"/>
<dbReference type="MGI" id="MGI:106098">
    <property type="gene designation" value="Etfb"/>
</dbReference>
<dbReference type="VEuPathDB" id="HostDB:ENSMUSG00000004610"/>
<dbReference type="eggNOG" id="KOG3180">
    <property type="taxonomic scope" value="Eukaryota"/>
</dbReference>
<dbReference type="GeneTree" id="ENSGT00390000009936"/>
<dbReference type="HOGENOM" id="CLU_060196_0_0_1"/>
<dbReference type="InParanoid" id="Q9DCW4"/>
<dbReference type="OMA" id="EINQPRI"/>
<dbReference type="OrthoDB" id="276685at2759"/>
<dbReference type="PhylomeDB" id="Q9DCW4"/>
<dbReference type="TreeFam" id="TF314039"/>
<dbReference type="Reactome" id="R-MMU-611105">
    <property type="pathway name" value="Respiratory electron transport"/>
</dbReference>
<dbReference type="Reactome" id="R-MMU-8876725">
    <property type="pathway name" value="Protein methylation"/>
</dbReference>
<dbReference type="BioGRID-ORCS" id="110826">
    <property type="hits" value="2 hits in 77 CRISPR screens"/>
</dbReference>
<dbReference type="ChiTaRS" id="Etfb">
    <property type="organism name" value="mouse"/>
</dbReference>
<dbReference type="PRO" id="PR:Q9DCW4"/>
<dbReference type="Proteomes" id="UP000000589">
    <property type="component" value="Chromosome 7"/>
</dbReference>
<dbReference type="RNAct" id="Q9DCW4">
    <property type="molecule type" value="protein"/>
</dbReference>
<dbReference type="Bgee" id="ENSMUSG00000004610">
    <property type="expression patterns" value="Expressed in proximal tubule and 77 other cell types or tissues"/>
</dbReference>
<dbReference type="ExpressionAtlas" id="Q9DCW4">
    <property type="expression patterns" value="baseline and differential"/>
</dbReference>
<dbReference type="GO" id="GO:0045251">
    <property type="term" value="C:electron transfer flavoprotein complex"/>
    <property type="evidence" value="ECO:0000266"/>
    <property type="project" value="ComplexPortal"/>
</dbReference>
<dbReference type="GO" id="GO:0017133">
    <property type="term" value="C:mitochondrial electron transfer flavoprotein complex"/>
    <property type="evidence" value="ECO:0000304"/>
    <property type="project" value="MGI"/>
</dbReference>
<dbReference type="GO" id="GO:0005759">
    <property type="term" value="C:mitochondrial matrix"/>
    <property type="evidence" value="ECO:0000250"/>
    <property type="project" value="UniProtKB"/>
</dbReference>
<dbReference type="GO" id="GO:0005739">
    <property type="term" value="C:mitochondrion"/>
    <property type="evidence" value="ECO:0007005"/>
    <property type="project" value="MGI"/>
</dbReference>
<dbReference type="GO" id="GO:0009055">
    <property type="term" value="F:electron transfer activity"/>
    <property type="evidence" value="ECO:0000250"/>
    <property type="project" value="UniProtKB"/>
</dbReference>
<dbReference type="GO" id="GO:0000166">
    <property type="term" value="F:nucleotide binding"/>
    <property type="evidence" value="ECO:0007669"/>
    <property type="project" value="UniProtKB-KW"/>
</dbReference>
<dbReference type="GO" id="GO:0009063">
    <property type="term" value="P:amino acid catabolic process"/>
    <property type="evidence" value="ECO:0000266"/>
    <property type="project" value="ComplexPortal"/>
</dbReference>
<dbReference type="GO" id="GO:0033539">
    <property type="term" value="P:fatty acid beta-oxidation using acyl-CoA dehydrogenase"/>
    <property type="evidence" value="ECO:0000315"/>
    <property type="project" value="UniProtKB"/>
</dbReference>
<dbReference type="GO" id="GO:0022904">
    <property type="term" value="P:respiratory electron transport chain"/>
    <property type="evidence" value="ECO:0000266"/>
    <property type="project" value="ComplexPortal"/>
</dbReference>
<dbReference type="CDD" id="cd01714">
    <property type="entry name" value="ETF_beta"/>
    <property type="match status" value="1"/>
</dbReference>
<dbReference type="FunFam" id="3.40.50.620:FF:000011">
    <property type="entry name" value="Electron transfer flavoprotein subunit beta"/>
    <property type="match status" value="1"/>
</dbReference>
<dbReference type="Gene3D" id="3.40.50.620">
    <property type="entry name" value="HUPs"/>
    <property type="match status" value="1"/>
</dbReference>
<dbReference type="InterPro" id="IPR000049">
    <property type="entry name" value="ET-Flavoprotein_bsu_CS"/>
</dbReference>
<dbReference type="InterPro" id="IPR014730">
    <property type="entry name" value="ETF_a/b_N"/>
</dbReference>
<dbReference type="InterPro" id="IPR012255">
    <property type="entry name" value="ETF_b"/>
</dbReference>
<dbReference type="InterPro" id="IPR033948">
    <property type="entry name" value="ETF_beta_N"/>
</dbReference>
<dbReference type="InterPro" id="IPR014729">
    <property type="entry name" value="Rossmann-like_a/b/a_fold"/>
</dbReference>
<dbReference type="PANTHER" id="PTHR21294">
    <property type="entry name" value="ELECTRON TRANSFER FLAVOPROTEIN BETA-SUBUNIT"/>
    <property type="match status" value="1"/>
</dbReference>
<dbReference type="PANTHER" id="PTHR21294:SF8">
    <property type="entry name" value="ELECTRON TRANSFER FLAVOPROTEIN SUBUNIT BETA"/>
    <property type="match status" value="1"/>
</dbReference>
<dbReference type="Pfam" id="PF01012">
    <property type="entry name" value="ETF"/>
    <property type="match status" value="1"/>
</dbReference>
<dbReference type="PIRSF" id="PIRSF000090">
    <property type="entry name" value="Beta-ETF"/>
    <property type="match status" value="1"/>
</dbReference>
<dbReference type="SMART" id="SM00893">
    <property type="entry name" value="ETF"/>
    <property type="match status" value="1"/>
</dbReference>
<dbReference type="SUPFAM" id="SSF52402">
    <property type="entry name" value="Adenine nucleotide alpha hydrolases-like"/>
    <property type="match status" value="1"/>
</dbReference>
<dbReference type="PROSITE" id="PS01065">
    <property type="entry name" value="ETF_BETA"/>
    <property type="match status" value="1"/>
</dbReference>
<feature type="initiator methionine" description="Removed" evidence="3">
    <location>
        <position position="1"/>
    </location>
</feature>
<feature type="chain" id="PRO_0000167871" description="Electron transfer flavoprotein subunit beta">
    <location>
        <begin position="2"/>
        <end position="255"/>
    </location>
</feature>
<feature type="region of interest" description="Recognition loop" evidence="1">
    <location>
        <begin position="183"/>
        <end position="205"/>
    </location>
</feature>
<feature type="binding site" evidence="1">
    <location>
        <position position="9"/>
    </location>
    <ligand>
        <name>AMP</name>
        <dbReference type="ChEBI" id="CHEBI:456215"/>
    </ligand>
</feature>
<feature type="binding site" evidence="1">
    <location>
        <begin position="39"/>
        <end position="42"/>
    </location>
    <ligand>
        <name>AMP</name>
        <dbReference type="ChEBI" id="CHEBI:456215"/>
    </ligand>
</feature>
<feature type="binding site" evidence="1">
    <location>
        <position position="66"/>
    </location>
    <ligand>
        <name>AMP</name>
        <dbReference type="ChEBI" id="CHEBI:456215"/>
    </ligand>
</feature>
<feature type="binding site" evidence="1">
    <location>
        <begin position="123"/>
        <end position="134"/>
    </location>
    <ligand>
        <name>AMP</name>
        <dbReference type="ChEBI" id="CHEBI:456215"/>
    </ligand>
</feature>
<feature type="modified residue" description="N-acetylalanine" evidence="3">
    <location>
        <position position="2"/>
    </location>
</feature>
<feature type="modified residue" description="N6,N6,N6-trimethyllysine; by ETFBKMT; alternate" evidence="2">
    <location>
        <position position="200"/>
    </location>
</feature>
<feature type="modified residue" description="N6-acetyllysine; alternate" evidence="6">
    <location>
        <position position="200"/>
    </location>
</feature>
<feature type="modified residue" description="N6-methyllysine; alternate" evidence="1">
    <location>
        <position position="200"/>
    </location>
</feature>
<feature type="modified residue" description="N6,N6,N6-trimethyllysine; by ETFBKMT" evidence="2">
    <location>
        <position position="203"/>
    </location>
</feature>
<feature type="modified residue" description="N6-acetyllysine; alternate" evidence="6">
    <location>
        <position position="210"/>
    </location>
</feature>
<feature type="modified residue" description="N6-succinyllysine; alternate" evidence="7">
    <location>
        <position position="210"/>
    </location>
</feature>
<feature type="modified residue" description="Phosphoserine" evidence="1">
    <location>
        <position position="223"/>
    </location>
</feature>
<feature type="modified residue" description="Phosphoserine" evidence="1">
    <location>
        <position position="226"/>
    </location>
</feature>
<feature type="modified residue" description="N6-acetyllysine" evidence="6">
    <location>
        <position position="238"/>
    </location>
</feature>
<feature type="modified residue" description="N6-acetyllysine; alternate" evidence="6">
    <location>
        <position position="248"/>
    </location>
</feature>
<feature type="modified residue" description="N6-succinyllysine; alternate" evidence="7">
    <location>
        <position position="248"/>
    </location>
</feature>
<feature type="sequence conflict" description="In Ref. 1; BAB22076." evidence="4" ref="1">
    <location>
        <begin position="2"/>
        <end position="4"/>
    </location>
</feature>
<accession>Q9DCW4</accession>
<accession>Q810V3</accession>
<evidence type="ECO:0000250" key="1">
    <source>
        <dbReference type="UniProtKB" id="P38117"/>
    </source>
</evidence>
<evidence type="ECO:0000269" key="2">
    <source>
    </source>
</evidence>
<evidence type="ECO:0000269" key="3">
    <source ref="3"/>
</evidence>
<evidence type="ECO:0000305" key="4"/>
<evidence type="ECO:0000312" key="5">
    <source>
        <dbReference type="MGI" id="MGI:106098"/>
    </source>
</evidence>
<evidence type="ECO:0007744" key="6">
    <source>
    </source>
</evidence>
<evidence type="ECO:0007744" key="7">
    <source>
    </source>
</evidence>
<gene>
    <name evidence="5" type="primary">Etfb</name>
</gene>
<sequence length="255" mass="27623">MAELRALVAVKRVIDFAVKIRVKPDKSGVVTDGVKHSMNPFCEIAVEEAVRLKEKKLVKEIIAVSCGPSQCQETIRTALAMGADRGIHVEIPGAQAESLGPLQVARVLAKLAEKEKVDLLFLGKQAIDDDCNQTGQMTAGLLDWPQGTFASQVTLEGDKVKVEREIDGGLETLRLKLPAVVTADLRLNEPRYATLPNIMKAKKKKIEVVKAGDLGVDLTSKVSVISVEEPPQRSAGVKVETTEDLVAKLKEVGRI</sequence>
<reference key="1">
    <citation type="journal article" date="2005" name="Science">
        <title>The transcriptional landscape of the mammalian genome.</title>
        <authorList>
            <person name="Carninci P."/>
            <person name="Kasukawa T."/>
            <person name="Katayama S."/>
            <person name="Gough J."/>
            <person name="Frith M.C."/>
            <person name="Maeda N."/>
            <person name="Oyama R."/>
            <person name="Ravasi T."/>
            <person name="Lenhard B."/>
            <person name="Wells C."/>
            <person name="Kodzius R."/>
            <person name="Shimokawa K."/>
            <person name="Bajic V.B."/>
            <person name="Brenner S.E."/>
            <person name="Batalov S."/>
            <person name="Forrest A.R."/>
            <person name="Zavolan M."/>
            <person name="Davis M.J."/>
            <person name="Wilming L.G."/>
            <person name="Aidinis V."/>
            <person name="Allen J.E."/>
            <person name="Ambesi-Impiombato A."/>
            <person name="Apweiler R."/>
            <person name="Aturaliya R.N."/>
            <person name="Bailey T.L."/>
            <person name="Bansal M."/>
            <person name="Baxter L."/>
            <person name="Beisel K.W."/>
            <person name="Bersano T."/>
            <person name="Bono H."/>
            <person name="Chalk A.M."/>
            <person name="Chiu K.P."/>
            <person name="Choudhary V."/>
            <person name="Christoffels A."/>
            <person name="Clutterbuck D.R."/>
            <person name="Crowe M.L."/>
            <person name="Dalla E."/>
            <person name="Dalrymple B.P."/>
            <person name="de Bono B."/>
            <person name="Della Gatta G."/>
            <person name="di Bernardo D."/>
            <person name="Down T."/>
            <person name="Engstrom P."/>
            <person name="Fagiolini M."/>
            <person name="Faulkner G."/>
            <person name="Fletcher C.F."/>
            <person name="Fukushima T."/>
            <person name="Furuno M."/>
            <person name="Futaki S."/>
            <person name="Gariboldi M."/>
            <person name="Georgii-Hemming P."/>
            <person name="Gingeras T.R."/>
            <person name="Gojobori T."/>
            <person name="Green R.E."/>
            <person name="Gustincich S."/>
            <person name="Harbers M."/>
            <person name="Hayashi Y."/>
            <person name="Hensch T.K."/>
            <person name="Hirokawa N."/>
            <person name="Hill D."/>
            <person name="Huminiecki L."/>
            <person name="Iacono M."/>
            <person name="Ikeo K."/>
            <person name="Iwama A."/>
            <person name="Ishikawa T."/>
            <person name="Jakt M."/>
            <person name="Kanapin A."/>
            <person name="Katoh M."/>
            <person name="Kawasawa Y."/>
            <person name="Kelso J."/>
            <person name="Kitamura H."/>
            <person name="Kitano H."/>
            <person name="Kollias G."/>
            <person name="Krishnan S.P."/>
            <person name="Kruger A."/>
            <person name="Kummerfeld S.K."/>
            <person name="Kurochkin I.V."/>
            <person name="Lareau L.F."/>
            <person name="Lazarevic D."/>
            <person name="Lipovich L."/>
            <person name="Liu J."/>
            <person name="Liuni S."/>
            <person name="McWilliam S."/>
            <person name="Madan Babu M."/>
            <person name="Madera M."/>
            <person name="Marchionni L."/>
            <person name="Matsuda H."/>
            <person name="Matsuzawa S."/>
            <person name="Miki H."/>
            <person name="Mignone F."/>
            <person name="Miyake S."/>
            <person name="Morris K."/>
            <person name="Mottagui-Tabar S."/>
            <person name="Mulder N."/>
            <person name="Nakano N."/>
            <person name="Nakauchi H."/>
            <person name="Ng P."/>
            <person name="Nilsson R."/>
            <person name="Nishiguchi S."/>
            <person name="Nishikawa S."/>
            <person name="Nori F."/>
            <person name="Ohara O."/>
            <person name="Okazaki Y."/>
            <person name="Orlando V."/>
            <person name="Pang K.C."/>
            <person name="Pavan W.J."/>
            <person name="Pavesi G."/>
            <person name="Pesole G."/>
            <person name="Petrovsky N."/>
            <person name="Piazza S."/>
            <person name="Reed J."/>
            <person name="Reid J.F."/>
            <person name="Ring B.Z."/>
            <person name="Ringwald M."/>
            <person name="Rost B."/>
            <person name="Ruan Y."/>
            <person name="Salzberg S.L."/>
            <person name="Sandelin A."/>
            <person name="Schneider C."/>
            <person name="Schoenbach C."/>
            <person name="Sekiguchi K."/>
            <person name="Semple C.A."/>
            <person name="Seno S."/>
            <person name="Sessa L."/>
            <person name="Sheng Y."/>
            <person name="Shibata Y."/>
            <person name="Shimada H."/>
            <person name="Shimada K."/>
            <person name="Silva D."/>
            <person name="Sinclair B."/>
            <person name="Sperling S."/>
            <person name="Stupka E."/>
            <person name="Sugiura K."/>
            <person name="Sultana R."/>
            <person name="Takenaka Y."/>
            <person name="Taki K."/>
            <person name="Tammoja K."/>
            <person name="Tan S.L."/>
            <person name="Tang S."/>
            <person name="Taylor M.S."/>
            <person name="Tegner J."/>
            <person name="Teichmann S.A."/>
            <person name="Ueda H.R."/>
            <person name="van Nimwegen E."/>
            <person name="Verardo R."/>
            <person name="Wei C.L."/>
            <person name="Yagi K."/>
            <person name="Yamanishi H."/>
            <person name="Zabarovsky E."/>
            <person name="Zhu S."/>
            <person name="Zimmer A."/>
            <person name="Hide W."/>
            <person name="Bult C."/>
            <person name="Grimmond S.M."/>
            <person name="Teasdale R.D."/>
            <person name="Liu E.T."/>
            <person name="Brusic V."/>
            <person name="Quackenbush J."/>
            <person name="Wahlestedt C."/>
            <person name="Mattick J.S."/>
            <person name="Hume D.A."/>
            <person name="Kai C."/>
            <person name="Sasaki D."/>
            <person name="Tomaru Y."/>
            <person name="Fukuda S."/>
            <person name="Kanamori-Katayama M."/>
            <person name="Suzuki M."/>
            <person name="Aoki J."/>
            <person name="Arakawa T."/>
            <person name="Iida J."/>
            <person name="Imamura K."/>
            <person name="Itoh M."/>
            <person name="Kato T."/>
            <person name="Kawaji H."/>
            <person name="Kawagashira N."/>
            <person name="Kawashima T."/>
            <person name="Kojima M."/>
            <person name="Kondo S."/>
            <person name="Konno H."/>
            <person name="Nakano K."/>
            <person name="Ninomiya N."/>
            <person name="Nishio T."/>
            <person name="Okada M."/>
            <person name="Plessy C."/>
            <person name="Shibata K."/>
            <person name="Shiraki T."/>
            <person name="Suzuki S."/>
            <person name="Tagami M."/>
            <person name="Waki K."/>
            <person name="Watahiki A."/>
            <person name="Okamura-Oho Y."/>
            <person name="Suzuki H."/>
            <person name="Kawai J."/>
            <person name="Hayashizaki Y."/>
        </authorList>
    </citation>
    <scope>NUCLEOTIDE SEQUENCE [LARGE SCALE MRNA]</scope>
    <source>
        <strain>C57BL/6J</strain>
        <tissue>Kidney</tissue>
        <tissue>Macrophage</tissue>
    </source>
</reference>
<reference key="2">
    <citation type="journal article" date="2004" name="Genome Res.">
        <title>The status, quality, and expansion of the NIH full-length cDNA project: the Mammalian Gene Collection (MGC).</title>
        <authorList>
            <consortium name="The MGC Project Team"/>
        </authorList>
    </citation>
    <scope>NUCLEOTIDE SEQUENCE [LARGE SCALE MRNA]</scope>
    <source>
        <strain>FVB/N</strain>
        <strain>FVB/N-3</strain>
        <tissue>Kidney</tissue>
        <tissue>Mammary tumor</tissue>
    </source>
</reference>
<reference key="3">
    <citation type="submission" date="2006-03" db="UniProtKB">
        <authorList>
            <person name="Kanor S."/>
            <person name="Quadroni M."/>
            <person name="Bienvenut W.V."/>
        </authorList>
    </citation>
    <scope>PROTEIN SEQUENCE OF 2-10 AND 210-220</scope>
    <scope>CLEAVAGE OF INITIATOR METHIONINE</scope>
    <scope>ACETYLATION AT ALA-2</scope>
    <scope>IDENTIFICATION BY MASS SPECTROMETRY</scope>
    <source>
        <strain>C57BL/6J</strain>
        <tissue>Skeletal muscle</tissue>
    </source>
</reference>
<reference key="4">
    <citation type="submission" date="2007-04" db="UniProtKB">
        <authorList>
            <person name="Lubec G."/>
            <person name="Klug S."/>
            <person name="Kang S.U."/>
        </authorList>
    </citation>
    <scope>PROTEIN SEQUENCE OF 77-106 AND 239-248</scope>
    <scope>IDENTIFICATION BY MASS SPECTROMETRY</scope>
    <source>
        <strain>C57BL/6J</strain>
        <tissue>Brain</tissue>
        <tissue>Hippocampus</tissue>
    </source>
</reference>
<reference key="5">
    <citation type="journal article" date="2010" name="Cell">
        <title>A tissue-specific atlas of mouse protein phosphorylation and expression.</title>
        <authorList>
            <person name="Huttlin E.L."/>
            <person name="Jedrychowski M.P."/>
            <person name="Elias J.E."/>
            <person name="Goswami T."/>
            <person name="Rad R."/>
            <person name="Beausoleil S.A."/>
            <person name="Villen J."/>
            <person name="Haas W."/>
            <person name="Sowa M.E."/>
            <person name="Gygi S.P."/>
        </authorList>
    </citation>
    <scope>IDENTIFICATION BY MASS SPECTROMETRY [LARGE SCALE ANALYSIS]</scope>
    <source>
        <tissue>Brain</tissue>
        <tissue>Brown adipose tissue</tissue>
        <tissue>Heart</tissue>
        <tissue>Kidney</tissue>
        <tissue>Liver</tissue>
        <tissue>Lung</tissue>
        <tissue>Pancreas</tissue>
        <tissue>Spleen</tissue>
        <tissue>Testis</tissue>
    </source>
</reference>
<reference key="6">
    <citation type="journal article" date="2013" name="Mol. Cell">
        <title>SIRT5-mediated lysine desuccinylation impacts diverse metabolic pathways.</title>
        <authorList>
            <person name="Park J."/>
            <person name="Chen Y."/>
            <person name="Tishkoff D.X."/>
            <person name="Peng C."/>
            <person name="Tan M."/>
            <person name="Dai L."/>
            <person name="Xie Z."/>
            <person name="Zhang Y."/>
            <person name="Zwaans B.M."/>
            <person name="Skinner M.E."/>
            <person name="Lombard D.B."/>
            <person name="Zhao Y."/>
        </authorList>
    </citation>
    <scope>SUCCINYLATION [LARGE SCALE ANALYSIS] AT LYS-210 AND LYS-248</scope>
    <scope>IDENTIFICATION BY MASS SPECTROMETRY [LARGE SCALE ANALYSIS]</scope>
    <source>
        <tissue>Liver</tissue>
    </source>
</reference>
<reference key="7">
    <citation type="journal article" date="2013" name="Proc. Natl. Acad. Sci. U.S.A.">
        <title>Label-free quantitative proteomics of the lysine acetylome in mitochondria identifies substrates of SIRT3 in metabolic pathways.</title>
        <authorList>
            <person name="Rardin M.J."/>
            <person name="Newman J.C."/>
            <person name="Held J.M."/>
            <person name="Cusack M.P."/>
            <person name="Sorensen D.J."/>
            <person name="Li B."/>
            <person name="Schilling B."/>
            <person name="Mooney S.D."/>
            <person name="Kahn C.R."/>
            <person name="Verdin E."/>
            <person name="Gibson B.W."/>
        </authorList>
    </citation>
    <scope>ACETYLATION [LARGE SCALE ANALYSIS] AT LYS-200; LYS-210; LYS-238 AND LYS-248</scope>
    <scope>IDENTIFICATION BY MASS SPECTROMETRY [LARGE SCALE ANALYSIS]</scope>
    <source>
        <tissue>Liver</tissue>
    </source>
</reference>
<reference key="8">
    <citation type="journal article" date="2014" name="J. Biol. Chem.">
        <title>Human METTL20 methylates lysine residues adjacent to the recognition loop of the electron transfer flavoprotein in mitochondria.</title>
        <authorList>
            <person name="Rhein V.F."/>
            <person name="Carroll J."/>
            <person name="He J."/>
            <person name="Ding S."/>
            <person name="Fearnley I.M."/>
            <person name="Walker J.E."/>
        </authorList>
    </citation>
    <scope>FUNCTION</scope>
    <scope>METHYLATION AT LYS-200 AND LYS-203</scope>
</reference>
<comment type="function">
    <text evidence="1 2">Heterodimeric electron transfer flavoprotein that accepts electrons from several mitochondrial dehydrogenases, including acyl-CoA dehydrogenases, glutaryl-CoA and sarcosine dehydrogenase. It transfers the electrons to the main mitochondrial respiratory chain via ETF-ubiquinone oxidoreductase (By similarity). Required for normal mitochondrial fatty acid oxidation and normal amino acid metabolism (PubMed:25023281). ETFB binds an AMP molecule that probably has a purely structural role (By similarity).</text>
</comment>
<comment type="subunit">
    <text evidence="1">Heterodimer composed of ETFA and ETFB. Identified in a complex that contains ETFA, ETFB and ETFRF1. Interacts with ACADM.</text>
</comment>
<comment type="subcellular location">
    <subcellularLocation>
        <location evidence="1">Mitochondrion matrix</location>
    </subcellularLocation>
</comment>
<comment type="domain">
    <text evidence="1">The recognition loop recognizes a hydrophobic patch at the surface of interacting dehydrogenases and acts as a static anchor at the interface.</text>
</comment>
<comment type="PTM">
    <text evidence="1 2">Methylated (PubMed:25023281). Trimethylation at Lys-200 and Lys-203 may negatively regulate the activity in electron transfer from acyl-CoA dehydrogenases.</text>
</comment>
<comment type="similarity">
    <text evidence="4">Belongs to the ETF beta-subunit/FixA family.</text>
</comment>
<proteinExistence type="evidence at protein level"/>